<gene>
    <name evidence="1" type="primary">miaA</name>
    <name type="ordered locus">c5255</name>
</gene>
<name>MIAA_ECOL6</name>
<feature type="chain" id="PRO_0000163914" description="tRNA dimethylallyltransferase">
    <location>
        <begin position="1"/>
        <end position="316"/>
    </location>
</feature>
<feature type="region of interest" description="Interaction with substrate tRNA" evidence="1">
    <location>
        <begin position="42"/>
        <end position="45"/>
    </location>
</feature>
<feature type="region of interest" description="Interaction with substrate tRNA" evidence="1">
    <location>
        <begin position="166"/>
        <end position="170"/>
    </location>
</feature>
<feature type="region of interest" description="Interaction with substrate tRNA" evidence="1">
    <location>
        <begin position="247"/>
        <end position="252"/>
    </location>
</feature>
<feature type="region of interest" description="Interaction with substrate tRNA" evidence="1">
    <location>
        <begin position="280"/>
        <end position="287"/>
    </location>
</feature>
<feature type="binding site" evidence="1">
    <location>
        <begin position="17"/>
        <end position="24"/>
    </location>
    <ligand>
        <name>ATP</name>
        <dbReference type="ChEBI" id="CHEBI:30616"/>
    </ligand>
</feature>
<feature type="binding site" evidence="1">
    <location>
        <begin position="19"/>
        <end position="24"/>
    </location>
    <ligand>
        <name>substrate</name>
    </ligand>
</feature>
<feature type="site" description="Interaction with substrate tRNA" evidence="1">
    <location>
        <position position="108"/>
    </location>
</feature>
<feature type="site" description="Interaction with substrate tRNA" evidence="1">
    <location>
        <position position="130"/>
    </location>
</feature>
<keyword id="KW-0067">ATP-binding</keyword>
<keyword id="KW-0460">Magnesium</keyword>
<keyword id="KW-0547">Nucleotide-binding</keyword>
<keyword id="KW-1185">Reference proteome</keyword>
<keyword id="KW-0808">Transferase</keyword>
<keyword id="KW-0819">tRNA processing</keyword>
<reference key="1">
    <citation type="journal article" date="2002" name="Proc. Natl. Acad. Sci. U.S.A.">
        <title>Extensive mosaic structure revealed by the complete genome sequence of uropathogenic Escherichia coli.</title>
        <authorList>
            <person name="Welch R.A."/>
            <person name="Burland V."/>
            <person name="Plunkett G. III"/>
            <person name="Redford P."/>
            <person name="Roesch P."/>
            <person name="Rasko D."/>
            <person name="Buckles E.L."/>
            <person name="Liou S.-R."/>
            <person name="Boutin A."/>
            <person name="Hackett J."/>
            <person name="Stroud D."/>
            <person name="Mayhew G.F."/>
            <person name="Rose D.J."/>
            <person name="Zhou S."/>
            <person name="Schwartz D.C."/>
            <person name="Perna N.T."/>
            <person name="Mobley H.L.T."/>
            <person name="Donnenberg M.S."/>
            <person name="Blattner F.R."/>
        </authorList>
    </citation>
    <scope>NUCLEOTIDE SEQUENCE [LARGE SCALE GENOMIC DNA]</scope>
    <source>
        <strain>CFT073 / ATCC 700928 / UPEC</strain>
    </source>
</reference>
<organism>
    <name type="scientific">Escherichia coli O6:H1 (strain CFT073 / ATCC 700928 / UPEC)</name>
    <dbReference type="NCBI Taxonomy" id="199310"/>
    <lineage>
        <taxon>Bacteria</taxon>
        <taxon>Pseudomonadati</taxon>
        <taxon>Pseudomonadota</taxon>
        <taxon>Gammaproteobacteria</taxon>
        <taxon>Enterobacterales</taxon>
        <taxon>Enterobacteriaceae</taxon>
        <taxon>Escherichia</taxon>
    </lineage>
</organism>
<dbReference type="EC" id="2.5.1.75" evidence="1"/>
<dbReference type="EMBL" id="AE014075">
    <property type="protein sequence ID" value="AAN83677.1"/>
    <property type="molecule type" value="Genomic_DNA"/>
</dbReference>
<dbReference type="RefSeq" id="WP_001280357.1">
    <property type="nucleotide sequence ID" value="NZ_CP051263.1"/>
</dbReference>
<dbReference type="SMR" id="Q8CXV3"/>
<dbReference type="STRING" id="199310.c5255"/>
<dbReference type="KEGG" id="ecc:c5255"/>
<dbReference type="eggNOG" id="COG0324">
    <property type="taxonomic scope" value="Bacteria"/>
</dbReference>
<dbReference type="HOGENOM" id="CLU_032616_0_0_6"/>
<dbReference type="BioCyc" id="ECOL199310:C5255-MONOMER"/>
<dbReference type="Proteomes" id="UP000001410">
    <property type="component" value="Chromosome"/>
</dbReference>
<dbReference type="GO" id="GO:0005524">
    <property type="term" value="F:ATP binding"/>
    <property type="evidence" value="ECO:0007669"/>
    <property type="project" value="UniProtKB-UniRule"/>
</dbReference>
<dbReference type="GO" id="GO:0052381">
    <property type="term" value="F:tRNA dimethylallyltransferase activity"/>
    <property type="evidence" value="ECO:0007669"/>
    <property type="project" value="UniProtKB-UniRule"/>
</dbReference>
<dbReference type="GO" id="GO:0006400">
    <property type="term" value="P:tRNA modification"/>
    <property type="evidence" value="ECO:0007669"/>
    <property type="project" value="TreeGrafter"/>
</dbReference>
<dbReference type="FunFam" id="1.10.20.140:FF:000001">
    <property type="entry name" value="tRNA dimethylallyltransferase"/>
    <property type="match status" value="1"/>
</dbReference>
<dbReference type="FunFam" id="1.10.287.890:FF:000001">
    <property type="entry name" value="tRNA dimethylallyltransferase"/>
    <property type="match status" value="1"/>
</dbReference>
<dbReference type="Gene3D" id="1.10.20.140">
    <property type="match status" value="1"/>
</dbReference>
<dbReference type="Gene3D" id="1.10.287.890">
    <property type="entry name" value="Crystal structure of tRNA isopentenylpyrophosphate transferase (bh2366) domain"/>
    <property type="match status" value="1"/>
</dbReference>
<dbReference type="Gene3D" id="3.40.50.300">
    <property type="entry name" value="P-loop containing nucleotide triphosphate hydrolases"/>
    <property type="match status" value="1"/>
</dbReference>
<dbReference type="HAMAP" id="MF_00185">
    <property type="entry name" value="IPP_trans"/>
    <property type="match status" value="1"/>
</dbReference>
<dbReference type="InterPro" id="IPR039657">
    <property type="entry name" value="Dimethylallyltransferase"/>
</dbReference>
<dbReference type="InterPro" id="IPR018022">
    <property type="entry name" value="IPT"/>
</dbReference>
<dbReference type="InterPro" id="IPR027417">
    <property type="entry name" value="P-loop_NTPase"/>
</dbReference>
<dbReference type="NCBIfam" id="TIGR00174">
    <property type="entry name" value="miaA"/>
    <property type="match status" value="1"/>
</dbReference>
<dbReference type="PANTHER" id="PTHR11088">
    <property type="entry name" value="TRNA DIMETHYLALLYLTRANSFERASE"/>
    <property type="match status" value="1"/>
</dbReference>
<dbReference type="PANTHER" id="PTHR11088:SF60">
    <property type="entry name" value="TRNA DIMETHYLALLYLTRANSFERASE"/>
    <property type="match status" value="1"/>
</dbReference>
<dbReference type="Pfam" id="PF01715">
    <property type="entry name" value="IPPT"/>
    <property type="match status" value="1"/>
</dbReference>
<dbReference type="SUPFAM" id="SSF52540">
    <property type="entry name" value="P-loop containing nucleoside triphosphate hydrolases"/>
    <property type="match status" value="1"/>
</dbReference>
<sequence length="316" mass="35078">MSDISKASLPKAIFLMGPTASGKTALAIELRKILPVELISVDSALIYKGMDIGTAKPNAEELLAAPHRLLNIRDPSQAYSAADFRRDALAEMADITAAGRIPLLVGGTMLYFKALLEGLSPLPSADPEVRARIEQQAAEQGWESLHRQLQEIDPVAAARIHPNDPQRLSRALEVFFISGKTLTELTQTSGDALPYQVHQFAIAPASRELLHQRIEQRFHQMLASGFEAEVRALFARGDLHTDLPSIRCVGYRQMWSYLEGEISYDEMVYRGVCATRQLAKRQITWLRGWEGVHWLDSEKPEQARDEVLQVVGAIAG</sequence>
<evidence type="ECO:0000255" key="1">
    <source>
        <dbReference type="HAMAP-Rule" id="MF_00185"/>
    </source>
</evidence>
<accession>Q8CXV3</accession>
<proteinExistence type="inferred from homology"/>
<comment type="function">
    <text evidence="1">Catalyzes the transfer of a dimethylallyl group onto the adenine at position 37 in tRNAs that read codons beginning with uridine, leading to the formation of N6-(dimethylallyl)adenosine (i(6)A).</text>
</comment>
<comment type="catalytic activity">
    <reaction evidence="1">
        <text>adenosine(37) in tRNA + dimethylallyl diphosphate = N(6)-dimethylallyladenosine(37) in tRNA + diphosphate</text>
        <dbReference type="Rhea" id="RHEA:26482"/>
        <dbReference type="Rhea" id="RHEA-COMP:10162"/>
        <dbReference type="Rhea" id="RHEA-COMP:10375"/>
        <dbReference type="ChEBI" id="CHEBI:33019"/>
        <dbReference type="ChEBI" id="CHEBI:57623"/>
        <dbReference type="ChEBI" id="CHEBI:74411"/>
        <dbReference type="ChEBI" id="CHEBI:74415"/>
        <dbReference type="EC" id="2.5.1.75"/>
    </reaction>
</comment>
<comment type="cofactor">
    <cofactor evidence="1">
        <name>Mg(2+)</name>
        <dbReference type="ChEBI" id="CHEBI:18420"/>
    </cofactor>
</comment>
<comment type="subunit">
    <text evidence="1">Monomer.</text>
</comment>
<comment type="similarity">
    <text evidence="1">Belongs to the IPP transferase family.</text>
</comment>
<protein>
    <recommendedName>
        <fullName evidence="1">tRNA dimethylallyltransferase</fullName>
        <ecNumber evidence="1">2.5.1.75</ecNumber>
    </recommendedName>
    <alternativeName>
        <fullName evidence="1">Dimethylallyl diphosphate:tRNA dimethylallyltransferase</fullName>
        <shortName evidence="1">DMAPP:tRNA dimethylallyltransferase</shortName>
        <shortName evidence="1">DMATase</shortName>
    </alternativeName>
    <alternativeName>
        <fullName evidence="1">Isopentenyl-diphosphate:tRNA isopentenyltransferase</fullName>
        <shortName evidence="1">IPP transferase</shortName>
        <shortName evidence="1">IPPT</shortName>
        <shortName evidence="1">IPTase</shortName>
    </alternativeName>
</protein>